<comment type="function">
    <text evidence="1">RuBisCO catalyzes two reactions: the carboxylation of D-ribulose 1,5-bisphosphate, the primary event in carbon dioxide fixation, as well as the oxidative fragmentation of the pentose substrate. Both reactions occur simultaneously and in competition at the same active site.</text>
</comment>
<comment type="catalytic activity">
    <reaction evidence="1">
        <text>2 (2R)-3-phosphoglycerate + 2 H(+) = D-ribulose 1,5-bisphosphate + CO2 + H2O</text>
        <dbReference type="Rhea" id="RHEA:23124"/>
        <dbReference type="ChEBI" id="CHEBI:15377"/>
        <dbReference type="ChEBI" id="CHEBI:15378"/>
        <dbReference type="ChEBI" id="CHEBI:16526"/>
        <dbReference type="ChEBI" id="CHEBI:57870"/>
        <dbReference type="ChEBI" id="CHEBI:58272"/>
        <dbReference type="EC" id="4.1.1.39"/>
    </reaction>
</comment>
<comment type="catalytic activity">
    <reaction evidence="1">
        <text>D-ribulose 1,5-bisphosphate + O2 = 2-phosphoglycolate + (2R)-3-phosphoglycerate + 2 H(+)</text>
        <dbReference type="Rhea" id="RHEA:36631"/>
        <dbReference type="ChEBI" id="CHEBI:15378"/>
        <dbReference type="ChEBI" id="CHEBI:15379"/>
        <dbReference type="ChEBI" id="CHEBI:57870"/>
        <dbReference type="ChEBI" id="CHEBI:58033"/>
        <dbReference type="ChEBI" id="CHEBI:58272"/>
    </reaction>
</comment>
<comment type="cofactor">
    <cofactor evidence="1">
        <name>Mg(2+)</name>
        <dbReference type="ChEBI" id="CHEBI:18420"/>
    </cofactor>
    <text evidence="1">Binds 1 Mg(2+) ion per subunit.</text>
</comment>
<comment type="subunit">
    <text evidence="1">Heterohexadecamer of 8 large chains and 8 small chains.</text>
</comment>
<comment type="induction">
    <text>Expressed under CO(2) and H(2) autotrophic, but not under heterotrophic growth conditions.</text>
</comment>
<comment type="miscellaneous">
    <text evidence="1">The basic functional RuBisCO is composed of a large chain homodimer in a 'head-to-tail' conformation. In form I RuBisCO this homodimer is arranged in a barrel-like tetramer with the small subunits forming a tetrameric 'cap' on each end of the 'barrel'.</text>
</comment>
<comment type="similarity">
    <text evidence="1">Belongs to the RuBisCO large chain family. Type I subfamily.</text>
</comment>
<dbReference type="EC" id="4.1.1.39" evidence="1"/>
<dbReference type="EMBL" id="CP002827">
    <property type="protein sequence ID" value="AEI08121.1"/>
    <property type="molecule type" value="Genomic_DNA"/>
</dbReference>
<dbReference type="RefSeq" id="WP_013913745.1">
    <property type="nucleotide sequence ID" value="NC_015689.1"/>
</dbReference>
<dbReference type="SMR" id="Q6LBA6"/>
<dbReference type="KEGG" id="ocg:OCA5_pHCG300470"/>
<dbReference type="PATRIC" id="fig|504832.7.peg.3622"/>
<dbReference type="HOGENOM" id="CLU_031450_2_0_5"/>
<dbReference type="OrthoDB" id="9764279at2"/>
<dbReference type="Proteomes" id="UP000007730">
    <property type="component" value="Plasmid pHCG3"/>
</dbReference>
<dbReference type="GO" id="GO:0000287">
    <property type="term" value="F:magnesium ion binding"/>
    <property type="evidence" value="ECO:0007669"/>
    <property type="project" value="UniProtKB-UniRule"/>
</dbReference>
<dbReference type="GO" id="GO:0004497">
    <property type="term" value="F:monooxygenase activity"/>
    <property type="evidence" value="ECO:0007669"/>
    <property type="project" value="UniProtKB-KW"/>
</dbReference>
<dbReference type="GO" id="GO:0016984">
    <property type="term" value="F:ribulose-bisphosphate carboxylase activity"/>
    <property type="evidence" value="ECO:0007669"/>
    <property type="project" value="UniProtKB-UniRule"/>
</dbReference>
<dbReference type="GO" id="GO:0019253">
    <property type="term" value="P:reductive pentose-phosphate cycle"/>
    <property type="evidence" value="ECO:0007669"/>
    <property type="project" value="UniProtKB-UniRule"/>
</dbReference>
<dbReference type="CDD" id="cd08212">
    <property type="entry name" value="RuBisCO_large_I"/>
    <property type="match status" value="1"/>
</dbReference>
<dbReference type="Gene3D" id="3.20.20.110">
    <property type="entry name" value="Ribulose bisphosphate carboxylase, large subunit, C-terminal domain"/>
    <property type="match status" value="1"/>
</dbReference>
<dbReference type="Gene3D" id="3.30.70.150">
    <property type="entry name" value="RuBisCO large subunit, N-terminal domain"/>
    <property type="match status" value="1"/>
</dbReference>
<dbReference type="HAMAP" id="MF_01338">
    <property type="entry name" value="RuBisCO_L_type1"/>
    <property type="match status" value="1"/>
</dbReference>
<dbReference type="InterPro" id="IPR033966">
    <property type="entry name" value="RuBisCO"/>
</dbReference>
<dbReference type="InterPro" id="IPR020878">
    <property type="entry name" value="RuBisCo_large_chain_AS"/>
</dbReference>
<dbReference type="InterPro" id="IPR000685">
    <property type="entry name" value="RuBisCO_lsu_C"/>
</dbReference>
<dbReference type="InterPro" id="IPR036376">
    <property type="entry name" value="RuBisCO_lsu_C_sf"/>
</dbReference>
<dbReference type="InterPro" id="IPR017443">
    <property type="entry name" value="RuBisCO_lsu_fd_N"/>
</dbReference>
<dbReference type="InterPro" id="IPR036422">
    <property type="entry name" value="RuBisCO_lsu_N_sf"/>
</dbReference>
<dbReference type="InterPro" id="IPR020888">
    <property type="entry name" value="RuBisCO_lsuI"/>
</dbReference>
<dbReference type="NCBIfam" id="NF003252">
    <property type="entry name" value="PRK04208.1"/>
    <property type="match status" value="1"/>
</dbReference>
<dbReference type="PANTHER" id="PTHR42704">
    <property type="entry name" value="RIBULOSE BISPHOSPHATE CARBOXYLASE"/>
    <property type="match status" value="1"/>
</dbReference>
<dbReference type="PANTHER" id="PTHR42704:SF17">
    <property type="entry name" value="RIBULOSE BISPHOSPHATE CARBOXYLASE LARGE CHAIN"/>
    <property type="match status" value="1"/>
</dbReference>
<dbReference type="Pfam" id="PF00016">
    <property type="entry name" value="RuBisCO_large"/>
    <property type="match status" value="1"/>
</dbReference>
<dbReference type="Pfam" id="PF02788">
    <property type="entry name" value="RuBisCO_large_N"/>
    <property type="match status" value="1"/>
</dbReference>
<dbReference type="SFLD" id="SFLDG01052">
    <property type="entry name" value="RuBisCO"/>
    <property type="match status" value="1"/>
</dbReference>
<dbReference type="SFLD" id="SFLDS00014">
    <property type="entry name" value="RuBisCO"/>
    <property type="match status" value="1"/>
</dbReference>
<dbReference type="SFLD" id="SFLDG00301">
    <property type="entry name" value="RuBisCO-like_proteins"/>
    <property type="match status" value="1"/>
</dbReference>
<dbReference type="SUPFAM" id="SSF51649">
    <property type="entry name" value="RuBisCo, C-terminal domain"/>
    <property type="match status" value="1"/>
</dbReference>
<dbReference type="SUPFAM" id="SSF54966">
    <property type="entry name" value="RuBisCO, large subunit, small (N-terminal) domain"/>
    <property type="match status" value="1"/>
</dbReference>
<dbReference type="PROSITE" id="PS00157">
    <property type="entry name" value="RUBISCO_LARGE"/>
    <property type="match status" value="1"/>
</dbReference>
<sequence>MNDQSMTIRGKDRYKSGVMAYKKMGYWEPDYVPKDTDVIALFRVTPQDGVDPIEAAAAVAGESSTATWTVVWTDRLTAAEKYRAKCYRVDPVPNSPGQYFAYIAYDLDLFEPGSISNLTASIIGNVFGFKPLKGLRLEDMRLPVAYVKTFQGPATGIVVERERLDKFGRPLLGATVKPKLGLSGRNYGRVVYEALKGGLDFTKDDENINSQPFMHWRERFLYCMEAVNRAQAASGEVKGTYLNVTAATMEDMYERAEFAKELGSCIVMIDLVIGYTAIQSMAKWARKNDMILHLHRAGHSTYTRQKNHGVSFRVIAKWMRLAGVDHIHAGTVVGKLEGDPNTTRGYYDICREEFNPTKLEHGIFFDQNWASLNKMMPVASGGIHAGQMHQLLDLLGEDVVLQFGGGTIGHPMGIQAGAIANRVALEAMILARNEGRDYVAEGPEILAKAAATCTPLKSALEVWKDVTFNYESTDAPDFVPTAIAAV</sequence>
<feature type="chain" id="PRO_0000062635" description="Ribulose bisphosphate carboxylase large chain">
    <location>
        <begin position="1"/>
        <end position="486"/>
    </location>
</feature>
<feature type="active site" description="Proton acceptor" evidence="1">
    <location>
        <position position="177"/>
    </location>
</feature>
<feature type="active site" description="Proton acceptor" evidence="1">
    <location>
        <position position="295"/>
    </location>
</feature>
<feature type="binding site" description="in homodimeric partner" evidence="1">
    <location>
        <position position="125"/>
    </location>
    <ligand>
        <name>substrate</name>
    </ligand>
</feature>
<feature type="binding site" evidence="1">
    <location>
        <position position="175"/>
    </location>
    <ligand>
        <name>substrate</name>
    </ligand>
</feature>
<feature type="binding site" evidence="1">
    <location>
        <position position="179"/>
    </location>
    <ligand>
        <name>substrate</name>
    </ligand>
</feature>
<feature type="binding site" description="via carbamate group" evidence="1">
    <location>
        <position position="203"/>
    </location>
    <ligand>
        <name>Mg(2+)</name>
        <dbReference type="ChEBI" id="CHEBI:18420"/>
    </ligand>
</feature>
<feature type="binding site" evidence="1">
    <location>
        <position position="205"/>
    </location>
    <ligand>
        <name>Mg(2+)</name>
        <dbReference type="ChEBI" id="CHEBI:18420"/>
    </ligand>
</feature>
<feature type="binding site" evidence="1">
    <location>
        <position position="206"/>
    </location>
    <ligand>
        <name>Mg(2+)</name>
        <dbReference type="ChEBI" id="CHEBI:18420"/>
    </ligand>
</feature>
<feature type="binding site" evidence="1">
    <location>
        <position position="296"/>
    </location>
    <ligand>
        <name>substrate</name>
    </ligand>
</feature>
<feature type="binding site" evidence="1">
    <location>
        <position position="328"/>
    </location>
    <ligand>
        <name>substrate</name>
    </ligand>
</feature>
<feature type="binding site" evidence="1">
    <location>
        <position position="380"/>
    </location>
    <ligand>
        <name>substrate</name>
    </ligand>
</feature>
<feature type="site" description="Transition state stabilizer" evidence="1">
    <location>
        <position position="335"/>
    </location>
</feature>
<feature type="modified residue" description="N6-carboxylysine" evidence="1">
    <location>
        <position position="203"/>
    </location>
</feature>
<accession>Q6LBA6</accession>
<accession>F8C111</accession>
<proteinExistence type="evidence at transcript level"/>
<gene>
    <name evidence="1" type="primary">cbbL</name>
    <name type="ordered locus">OCA5_pHCG300470</name>
</gene>
<reference key="1">
    <citation type="journal article" date="1999" name="Gene">
        <title>Sequence analysis, characterization and CO-specific transcription of the cox gene cluster on the megaplasmid pHCG3 of Oligotropha carboxidovorans.</title>
        <authorList>
            <person name="Santiago B."/>
            <person name="Schuebel U."/>
            <person name="Egelseer C."/>
            <person name="Meyer O."/>
        </authorList>
    </citation>
    <scope>NUCLEOTIDE SEQUENCE [GENOMIC DNA]</scope>
    <scope>MRNA EXPRESSION</scope>
    <source>
        <strain>ATCC 49405 / DSM 1227 / KCTC 32145 / OM5</strain>
    </source>
</reference>
<reference key="2">
    <citation type="journal article" date="2003" name="Gene">
        <title>Complete nucleotide sequence of the circular megaplasmid pHCG3 of Oligotropha carboxidovorans: function in the chemolithoautotrophic utilization of CO, H(2) and CO(2).</title>
        <authorList>
            <person name="Fuhrmann S."/>
            <person name="Ferner M."/>
            <person name="Jeffke T."/>
            <person name="Henne A."/>
            <person name="Gottschalk G."/>
            <person name="Meyer O."/>
        </authorList>
    </citation>
    <scope>NUCLEOTIDE SEQUENCE [LARGE SCALE GENOMIC DNA]</scope>
    <source>
        <strain>ATCC 49405 / DSM 1227 / KCTC 32145 / OM5</strain>
    </source>
</reference>
<reference key="3">
    <citation type="journal article" date="2011" name="J. Bacteriol.">
        <title>Complete genome sequences of the chemolithoautotrophic Oligotropha carboxidovorans strains OM4 and OM5.</title>
        <authorList>
            <person name="Volland S."/>
            <person name="Rachinger M."/>
            <person name="Strittmatter A."/>
            <person name="Daniel R."/>
            <person name="Gottschalk G."/>
            <person name="Meyer O."/>
        </authorList>
    </citation>
    <scope>NUCLEOTIDE SEQUENCE [LARGE SCALE GENOMIC DNA]</scope>
    <source>
        <strain>ATCC 49405 / DSM 1227 / KCTC 32145 / OM5</strain>
    </source>
</reference>
<protein>
    <recommendedName>
        <fullName evidence="1">Ribulose bisphosphate carboxylase large chain</fullName>
        <shortName evidence="1">RuBisCO large subunit</shortName>
        <ecNumber evidence="1">4.1.1.39</ecNumber>
    </recommendedName>
</protein>
<geneLocation type="plasmid">
    <name>megaplasmid pHCG3</name>
</geneLocation>
<organism>
    <name type="scientific">Afipia carboxidovorans (strain ATCC 49405 / DSM 1227 / KCTC 32145 / OM5)</name>
    <name type="common">Oligotropha carboxidovorans</name>
    <dbReference type="NCBI Taxonomy" id="504832"/>
    <lineage>
        <taxon>Bacteria</taxon>
        <taxon>Pseudomonadati</taxon>
        <taxon>Pseudomonadota</taxon>
        <taxon>Alphaproteobacteria</taxon>
        <taxon>Hyphomicrobiales</taxon>
        <taxon>Nitrobacteraceae</taxon>
        <taxon>Afipia</taxon>
    </lineage>
</organism>
<name>RBL_AFIC5</name>
<evidence type="ECO:0000255" key="1">
    <source>
        <dbReference type="HAMAP-Rule" id="MF_01338"/>
    </source>
</evidence>
<keyword id="KW-0113">Calvin cycle</keyword>
<keyword id="KW-0120">Carbon dioxide fixation</keyword>
<keyword id="KW-0456">Lyase</keyword>
<keyword id="KW-0460">Magnesium</keyword>
<keyword id="KW-0479">Metal-binding</keyword>
<keyword id="KW-0503">Monooxygenase</keyword>
<keyword id="KW-0560">Oxidoreductase</keyword>
<keyword id="KW-0614">Plasmid</keyword>
<keyword id="KW-1185">Reference proteome</keyword>